<feature type="chain" id="PRO_0000104606" description="Large ribosomal subunit protein uL30">
    <location>
        <begin position="1"/>
        <end position="59"/>
    </location>
</feature>
<name>RL30_STAAM</name>
<dbReference type="EMBL" id="BA000017">
    <property type="protein sequence ID" value="BAB58394.1"/>
    <property type="molecule type" value="Genomic_DNA"/>
</dbReference>
<dbReference type="RefSeq" id="WP_001096577.1">
    <property type="nucleotide sequence ID" value="NC_002758.2"/>
</dbReference>
<dbReference type="SMR" id="P0A0F9"/>
<dbReference type="KEGG" id="sav:SAV2232"/>
<dbReference type="HOGENOM" id="CLU_131047_2_1_9"/>
<dbReference type="PhylomeDB" id="P0A0F9"/>
<dbReference type="Proteomes" id="UP000002481">
    <property type="component" value="Chromosome"/>
</dbReference>
<dbReference type="GO" id="GO:0022625">
    <property type="term" value="C:cytosolic large ribosomal subunit"/>
    <property type="evidence" value="ECO:0007669"/>
    <property type="project" value="TreeGrafter"/>
</dbReference>
<dbReference type="GO" id="GO:0003735">
    <property type="term" value="F:structural constituent of ribosome"/>
    <property type="evidence" value="ECO:0007669"/>
    <property type="project" value="InterPro"/>
</dbReference>
<dbReference type="GO" id="GO:0006412">
    <property type="term" value="P:translation"/>
    <property type="evidence" value="ECO:0007669"/>
    <property type="project" value="UniProtKB-UniRule"/>
</dbReference>
<dbReference type="CDD" id="cd01658">
    <property type="entry name" value="Ribosomal_L30"/>
    <property type="match status" value="1"/>
</dbReference>
<dbReference type="FunFam" id="3.30.1390.20:FF:000001">
    <property type="entry name" value="50S ribosomal protein L30"/>
    <property type="match status" value="1"/>
</dbReference>
<dbReference type="Gene3D" id="3.30.1390.20">
    <property type="entry name" value="Ribosomal protein L30, ferredoxin-like fold domain"/>
    <property type="match status" value="1"/>
</dbReference>
<dbReference type="HAMAP" id="MF_01371_B">
    <property type="entry name" value="Ribosomal_uL30_B"/>
    <property type="match status" value="1"/>
</dbReference>
<dbReference type="InterPro" id="IPR036919">
    <property type="entry name" value="Ribo_uL30_ferredoxin-like_sf"/>
</dbReference>
<dbReference type="InterPro" id="IPR005996">
    <property type="entry name" value="Ribosomal_uL30_bac-type"/>
</dbReference>
<dbReference type="InterPro" id="IPR016082">
    <property type="entry name" value="Ribosomal_uL30_ferredoxin-like"/>
</dbReference>
<dbReference type="NCBIfam" id="TIGR01308">
    <property type="entry name" value="rpmD_bact"/>
    <property type="match status" value="1"/>
</dbReference>
<dbReference type="PANTHER" id="PTHR15892:SF2">
    <property type="entry name" value="LARGE RIBOSOMAL SUBUNIT PROTEIN UL30M"/>
    <property type="match status" value="1"/>
</dbReference>
<dbReference type="PANTHER" id="PTHR15892">
    <property type="entry name" value="MITOCHONDRIAL RIBOSOMAL PROTEIN L30"/>
    <property type="match status" value="1"/>
</dbReference>
<dbReference type="Pfam" id="PF00327">
    <property type="entry name" value="Ribosomal_L30"/>
    <property type="match status" value="1"/>
</dbReference>
<dbReference type="PIRSF" id="PIRSF002211">
    <property type="entry name" value="Ribosomal_L30_bac-type"/>
    <property type="match status" value="1"/>
</dbReference>
<dbReference type="SUPFAM" id="SSF55129">
    <property type="entry name" value="Ribosomal protein L30p/L7e"/>
    <property type="match status" value="1"/>
</dbReference>
<organism>
    <name type="scientific">Staphylococcus aureus (strain Mu50 / ATCC 700699)</name>
    <dbReference type="NCBI Taxonomy" id="158878"/>
    <lineage>
        <taxon>Bacteria</taxon>
        <taxon>Bacillati</taxon>
        <taxon>Bacillota</taxon>
        <taxon>Bacilli</taxon>
        <taxon>Bacillales</taxon>
        <taxon>Staphylococcaceae</taxon>
        <taxon>Staphylococcus</taxon>
    </lineage>
</organism>
<protein>
    <recommendedName>
        <fullName evidence="1">Large ribosomal subunit protein uL30</fullName>
    </recommendedName>
    <alternativeName>
        <fullName evidence="2">50S ribosomal protein L30</fullName>
    </alternativeName>
</protein>
<evidence type="ECO:0000255" key="1">
    <source>
        <dbReference type="HAMAP-Rule" id="MF_01371"/>
    </source>
</evidence>
<evidence type="ECO:0000305" key="2"/>
<gene>
    <name evidence="1" type="primary">rpmD</name>
    <name type="ordered locus">SAV2232</name>
</gene>
<keyword id="KW-0687">Ribonucleoprotein</keyword>
<keyword id="KW-0689">Ribosomal protein</keyword>
<reference key="1">
    <citation type="journal article" date="2001" name="Lancet">
        <title>Whole genome sequencing of meticillin-resistant Staphylococcus aureus.</title>
        <authorList>
            <person name="Kuroda M."/>
            <person name="Ohta T."/>
            <person name="Uchiyama I."/>
            <person name="Baba T."/>
            <person name="Yuzawa H."/>
            <person name="Kobayashi I."/>
            <person name="Cui L."/>
            <person name="Oguchi A."/>
            <person name="Aoki K."/>
            <person name="Nagai Y."/>
            <person name="Lian J.-Q."/>
            <person name="Ito T."/>
            <person name="Kanamori M."/>
            <person name="Matsumaru H."/>
            <person name="Maruyama A."/>
            <person name="Murakami H."/>
            <person name="Hosoyama A."/>
            <person name="Mizutani-Ui Y."/>
            <person name="Takahashi N.K."/>
            <person name="Sawano T."/>
            <person name="Inoue R."/>
            <person name="Kaito C."/>
            <person name="Sekimizu K."/>
            <person name="Hirakawa H."/>
            <person name="Kuhara S."/>
            <person name="Goto S."/>
            <person name="Yabuzaki J."/>
            <person name="Kanehisa M."/>
            <person name="Yamashita A."/>
            <person name="Oshima K."/>
            <person name="Furuya K."/>
            <person name="Yoshino C."/>
            <person name="Shiba T."/>
            <person name="Hattori M."/>
            <person name="Ogasawara N."/>
            <person name="Hayashi H."/>
            <person name="Hiramatsu K."/>
        </authorList>
    </citation>
    <scope>NUCLEOTIDE SEQUENCE [LARGE SCALE GENOMIC DNA]</scope>
    <source>
        <strain>Mu50 / ATCC 700699</strain>
    </source>
</reference>
<sequence length="59" mass="6554">MAKLQITLTRSVIGRPETQRKTVEALGLKKTNSSVVVEDNPAIRGQINKVKHLVTVEEK</sequence>
<proteinExistence type="inferred from homology"/>
<comment type="subunit">
    <text evidence="1">Part of the 50S ribosomal subunit.</text>
</comment>
<comment type="similarity">
    <text evidence="1">Belongs to the universal ribosomal protein uL30 family.</text>
</comment>
<accession>P0A0F9</accession>
<accession>O06444</accession>